<evidence type="ECO:0000255" key="1">
    <source>
        <dbReference type="PROSITE-ProRule" id="PRU00036"/>
    </source>
</evidence>
<evidence type="ECO:0000256" key="2">
    <source>
        <dbReference type="SAM" id="MobiDB-lite"/>
    </source>
</evidence>
<evidence type="ECO:0000269" key="3">
    <source>
    </source>
</evidence>
<evidence type="ECO:0000305" key="4"/>
<proteinExistence type="evidence at protein level"/>
<sequence>MADGEGGWWGGWLTQSFQSVKDKSAEAYEFIKRDLTEFSSVVQHDTACSVVATANAIKSKLAVEGSSETTEKVKKGITNILGVITDTLAPPPDKTIDCDVITLVATPTGTTEVYDSGKARLYSLQADPATYCNEPDGPPQQFDSWLSTFSLEERKAEISELLVSSPAIRALYTKMVPAAVAHAEFWQRYFYKVFQLEQEEARRVALKQRAEQTDHSESLGWEEEDEEGEFLGATSLSRLDFTPPVEESRVPAVTVADTPESSSPPQAVASLSNVASDVTPSVSSDSVSFPTQIENQAESVTIRVTQPSPAADELSQKLSDTGLQETFPEERPAPREETAREDMAQDLRVFELNSDSGKSTPSNNGKKGSSTDVSEDWEKDFDLDMTEEEVQMALSKVDATEELEDEDWENWE</sequence>
<protein>
    <recommendedName>
        <fullName>BSD domain-containing protein 1</fullName>
    </recommendedName>
</protein>
<keyword id="KW-0597">Phosphoprotein</keyword>
<keyword id="KW-1185">Reference proteome</keyword>
<gene>
    <name type="primary">bsdc1</name>
    <name type="ORF">si:ch211-51n3.2</name>
    <name type="ORF">zgc:100785</name>
</gene>
<organism>
    <name type="scientific">Danio rerio</name>
    <name type="common">Zebrafish</name>
    <name type="synonym">Brachydanio rerio</name>
    <dbReference type="NCBI Taxonomy" id="7955"/>
    <lineage>
        <taxon>Eukaryota</taxon>
        <taxon>Metazoa</taxon>
        <taxon>Chordata</taxon>
        <taxon>Craniata</taxon>
        <taxon>Vertebrata</taxon>
        <taxon>Euteleostomi</taxon>
        <taxon>Actinopterygii</taxon>
        <taxon>Neopterygii</taxon>
        <taxon>Teleostei</taxon>
        <taxon>Ostariophysi</taxon>
        <taxon>Cypriniformes</taxon>
        <taxon>Danionidae</taxon>
        <taxon>Danioninae</taxon>
        <taxon>Danio</taxon>
    </lineage>
</organism>
<reference key="1">
    <citation type="journal article" date="2013" name="Nature">
        <title>The zebrafish reference genome sequence and its relationship to the human genome.</title>
        <authorList>
            <person name="Howe K."/>
            <person name="Clark M.D."/>
            <person name="Torroja C.F."/>
            <person name="Torrance J."/>
            <person name="Berthelot C."/>
            <person name="Muffato M."/>
            <person name="Collins J.E."/>
            <person name="Humphray S."/>
            <person name="McLaren K."/>
            <person name="Matthews L."/>
            <person name="McLaren S."/>
            <person name="Sealy I."/>
            <person name="Caccamo M."/>
            <person name="Churcher C."/>
            <person name="Scott C."/>
            <person name="Barrett J.C."/>
            <person name="Koch R."/>
            <person name="Rauch G.J."/>
            <person name="White S."/>
            <person name="Chow W."/>
            <person name="Kilian B."/>
            <person name="Quintais L.T."/>
            <person name="Guerra-Assuncao J.A."/>
            <person name="Zhou Y."/>
            <person name="Gu Y."/>
            <person name="Yen J."/>
            <person name="Vogel J.H."/>
            <person name="Eyre T."/>
            <person name="Redmond S."/>
            <person name="Banerjee R."/>
            <person name="Chi J."/>
            <person name="Fu B."/>
            <person name="Langley E."/>
            <person name="Maguire S.F."/>
            <person name="Laird G.K."/>
            <person name="Lloyd D."/>
            <person name="Kenyon E."/>
            <person name="Donaldson S."/>
            <person name="Sehra H."/>
            <person name="Almeida-King J."/>
            <person name="Loveland J."/>
            <person name="Trevanion S."/>
            <person name="Jones M."/>
            <person name="Quail M."/>
            <person name="Willey D."/>
            <person name="Hunt A."/>
            <person name="Burton J."/>
            <person name="Sims S."/>
            <person name="McLay K."/>
            <person name="Plumb B."/>
            <person name="Davis J."/>
            <person name="Clee C."/>
            <person name="Oliver K."/>
            <person name="Clark R."/>
            <person name="Riddle C."/>
            <person name="Elliot D."/>
            <person name="Threadgold G."/>
            <person name="Harden G."/>
            <person name="Ware D."/>
            <person name="Begum S."/>
            <person name="Mortimore B."/>
            <person name="Kerry G."/>
            <person name="Heath P."/>
            <person name="Phillimore B."/>
            <person name="Tracey A."/>
            <person name="Corby N."/>
            <person name="Dunn M."/>
            <person name="Johnson C."/>
            <person name="Wood J."/>
            <person name="Clark S."/>
            <person name="Pelan S."/>
            <person name="Griffiths G."/>
            <person name="Smith M."/>
            <person name="Glithero R."/>
            <person name="Howden P."/>
            <person name="Barker N."/>
            <person name="Lloyd C."/>
            <person name="Stevens C."/>
            <person name="Harley J."/>
            <person name="Holt K."/>
            <person name="Panagiotidis G."/>
            <person name="Lovell J."/>
            <person name="Beasley H."/>
            <person name="Henderson C."/>
            <person name="Gordon D."/>
            <person name="Auger K."/>
            <person name="Wright D."/>
            <person name="Collins J."/>
            <person name="Raisen C."/>
            <person name="Dyer L."/>
            <person name="Leung K."/>
            <person name="Robertson L."/>
            <person name="Ambridge K."/>
            <person name="Leongamornlert D."/>
            <person name="McGuire S."/>
            <person name="Gilderthorp R."/>
            <person name="Griffiths C."/>
            <person name="Manthravadi D."/>
            <person name="Nichol S."/>
            <person name="Barker G."/>
            <person name="Whitehead S."/>
            <person name="Kay M."/>
            <person name="Brown J."/>
            <person name="Murnane C."/>
            <person name="Gray E."/>
            <person name="Humphries M."/>
            <person name="Sycamore N."/>
            <person name="Barker D."/>
            <person name="Saunders D."/>
            <person name="Wallis J."/>
            <person name="Babbage A."/>
            <person name="Hammond S."/>
            <person name="Mashreghi-Mohammadi M."/>
            <person name="Barr L."/>
            <person name="Martin S."/>
            <person name="Wray P."/>
            <person name="Ellington A."/>
            <person name="Matthews N."/>
            <person name="Ellwood M."/>
            <person name="Woodmansey R."/>
            <person name="Clark G."/>
            <person name="Cooper J."/>
            <person name="Tromans A."/>
            <person name="Grafham D."/>
            <person name="Skuce C."/>
            <person name="Pandian R."/>
            <person name="Andrews R."/>
            <person name="Harrison E."/>
            <person name="Kimberley A."/>
            <person name="Garnett J."/>
            <person name="Fosker N."/>
            <person name="Hall R."/>
            <person name="Garner P."/>
            <person name="Kelly D."/>
            <person name="Bird C."/>
            <person name="Palmer S."/>
            <person name="Gehring I."/>
            <person name="Berger A."/>
            <person name="Dooley C.M."/>
            <person name="Ersan-Urun Z."/>
            <person name="Eser C."/>
            <person name="Geiger H."/>
            <person name="Geisler M."/>
            <person name="Karotki L."/>
            <person name="Kirn A."/>
            <person name="Konantz J."/>
            <person name="Konantz M."/>
            <person name="Oberlander M."/>
            <person name="Rudolph-Geiger S."/>
            <person name="Teucke M."/>
            <person name="Lanz C."/>
            <person name="Raddatz G."/>
            <person name="Osoegawa K."/>
            <person name="Zhu B."/>
            <person name="Rapp A."/>
            <person name="Widaa S."/>
            <person name="Langford C."/>
            <person name="Yang F."/>
            <person name="Schuster S.C."/>
            <person name="Carter N.P."/>
            <person name="Harrow J."/>
            <person name="Ning Z."/>
            <person name="Herrero J."/>
            <person name="Searle S.M."/>
            <person name="Enright A."/>
            <person name="Geisler R."/>
            <person name="Plasterk R.H."/>
            <person name="Lee C."/>
            <person name="Westerfield M."/>
            <person name="de Jong P.J."/>
            <person name="Zon L.I."/>
            <person name="Postlethwait J.H."/>
            <person name="Nusslein-Volhard C."/>
            <person name="Hubbard T.J."/>
            <person name="Roest Crollius H."/>
            <person name="Rogers J."/>
            <person name="Stemple D.L."/>
        </authorList>
    </citation>
    <scope>NUCLEOTIDE SEQUENCE [LARGE SCALE GENOMIC DNA]</scope>
    <source>
        <strain>Tuebingen</strain>
    </source>
</reference>
<reference key="2">
    <citation type="submission" date="2004-08" db="EMBL/GenBank/DDBJ databases">
        <authorList>
            <consortium name="NIH - Zebrafish Gene Collection (ZGC) project"/>
        </authorList>
    </citation>
    <scope>NUCLEOTIDE SEQUENCE [LARGE SCALE MRNA]</scope>
    <source>
        <tissue>Embryo</tissue>
    </source>
</reference>
<reference key="3">
    <citation type="journal article" date="2008" name="J. Proteome Res.">
        <title>Online automated in vivo zebrafish phosphoproteomics: from large-scale analysis down to a single embryo.</title>
        <authorList>
            <person name="Lemeer S."/>
            <person name="Pinkse M.W.H."/>
            <person name="Mohammed S."/>
            <person name="van Breukelen B."/>
            <person name="den Hertog J."/>
            <person name="Slijper M."/>
            <person name="Heck A.J.R."/>
        </authorList>
    </citation>
    <scope>PHOSPHORYLATION [LARGE SCALE ANALYSIS] AT SER-308</scope>
    <scope>IDENTIFICATION BY MASS SPECTROMETRY</scope>
    <source>
        <tissue>Embryo</tissue>
    </source>
</reference>
<dbReference type="EMBL" id="BX936305">
    <property type="protein sequence ID" value="CAM12911.1"/>
    <property type="molecule type" value="Genomic_DNA"/>
</dbReference>
<dbReference type="EMBL" id="BC080207">
    <property type="protein sequence ID" value="AAH80207.1"/>
    <property type="molecule type" value="mRNA"/>
</dbReference>
<dbReference type="RefSeq" id="NP_001004108.2">
    <property type="nucleotide sequence ID" value="NM_001004108.2"/>
</dbReference>
<dbReference type="FunCoup" id="A2BIJ3">
    <property type="interactions" value="638"/>
</dbReference>
<dbReference type="STRING" id="7955.ENSDARP00000003318"/>
<dbReference type="iPTMnet" id="A2BIJ3"/>
<dbReference type="PaxDb" id="7955-ENSDARP00000003318"/>
<dbReference type="Ensembl" id="ENSDART00000005195">
    <property type="protein sequence ID" value="ENSDARP00000003318"/>
    <property type="gene ID" value="ENSDARG00000052623"/>
</dbReference>
<dbReference type="GeneID" id="794882"/>
<dbReference type="KEGG" id="dre:794882"/>
<dbReference type="AGR" id="ZFIN:ZDB-GENE-040905-1"/>
<dbReference type="CTD" id="55108"/>
<dbReference type="ZFIN" id="ZDB-GENE-040905-1">
    <property type="gene designation" value="bsdc1"/>
</dbReference>
<dbReference type="eggNOG" id="KOG2690">
    <property type="taxonomic scope" value="Eukaryota"/>
</dbReference>
<dbReference type="HOGENOM" id="CLU_053864_0_0_1"/>
<dbReference type="InParanoid" id="A2BIJ3"/>
<dbReference type="OMA" id="TCFLCWF"/>
<dbReference type="OrthoDB" id="73788at2759"/>
<dbReference type="PhylomeDB" id="A2BIJ3"/>
<dbReference type="TreeFam" id="TF313210"/>
<dbReference type="PRO" id="PR:A2BIJ3"/>
<dbReference type="Proteomes" id="UP000000437">
    <property type="component" value="Alternate scaffold 13"/>
</dbReference>
<dbReference type="Proteomes" id="UP000000437">
    <property type="component" value="Chromosome 13"/>
</dbReference>
<dbReference type="Bgee" id="ENSDARG00000052623">
    <property type="expression patterns" value="Expressed in muscle tissue and 28 other cell types or tissues"/>
</dbReference>
<dbReference type="ExpressionAtlas" id="A2BIJ3">
    <property type="expression patterns" value="baseline and differential"/>
</dbReference>
<dbReference type="GO" id="GO:0005737">
    <property type="term" value="C:cytoplasm"/>
    <property type="evidence" value="ECO:0000318"/>
    <property type="project" value="GO_Central"/>
</dbReference>
<dbReference type="Gene3D" id="1.10.3970.10">
    <property type="entry name" value="BSD domain"/>
    <property type="match status" value="1"/>
</dbReference>
<dbReference type="InterPro" id="IPR005607">
    <property type="entry name" value="BSD_dom"/>
</dbReference>
<dbReference type="InterPro" id="IPR035925">
    <property type="entry name" value="BSD_dom_sf"/>
</dbReference>
<dbReference type="InterPro" id="IPR051494">
    <property type="entry name" value="BSD_domain-containing"/>
</dbReference>
<dbReference type="PANTHER" id="PTHR16019:SF5">
    <property type="entry name" value="BSD DOMAIN-CONTAINING PROTEIN 1"/>
    <property type="match status" value="1"/>
</dbReference>
<dbReference type="PANTHER" id="PTHR16019">
    <property type="entry name" value="SYNAPSE-ASSOCIATED PROTEIN"/>
    <property type="match status" value="1"/>
</dbReference>
<dbReference type="Pfam" id="PF03909">
    <property type="entry name" value="BSD"/>
    <property type="match status" value="1"/>
</dbReference>
<dbReference type="SMART" id="SM00751">
    <property type="entry name" value="BSD"/>
    <property type="match status" value="1"/>
</dbReference>
<dbReference type="SUPFAM" id="SSF140383">
    <property type="entry name" value="BSD domain-like"/>
    <property type="match status" value="1"/>
</dbReference>
<dbReference type="PROSITE" id="PS50858">
    <property type="entry name" value="BSD"/>
    <property type="match status" value="1"/>
</dbReference>
<accession>A2BIJ3</accession>
<accession>Q68EL9</accession>
<feature type="chain" id="PRO_0000282642" description="BSD domain-containing protein 1">
    <location>
        <begin position="1"/>
        <end position="412"/>
    </location>
</feature>
<feature type="domain" description="BSD" evidence="1">
    <location>
        <begin position="145"/>
        <end position="197"/>
    </location>
</feature>
<feature type="region of interest" description="Disordered" evidence="2">
    <location>
        <begin position="208"/>
        <end position="227"/>
    </location>
</feature>
<feature type="region of interest" description="Disordered" evidence="2">
    <location>
        <begin position="253"/>
        <end position="272"/>
    </location>
</feature>
<feature type="region of interest" description="Disordered" evidence="2">
    <location>
        <begin position="298"/>
        <end position="412"/>
    </location>
</feature>
<feature type="compositionally biased region" description="Basic and acidic residues" evidence="2">
    <location>
        <begin position="208"/>
        <end position="217"/>
    </location>
</feature>
<feature type="compositionally biased region" description="Polar residues" evidence="2">
    <location>
        <begin position="259"/>
        <end position="272"/>
    </location>
</feature>
<feature type="compositionally biased region" description="Polar residues" evidence="2">
    <location>
        <begin position="298"/>
        <end position="308"/>
    </location>
</feature>
<feature type="compositionally biased region" description="Basic and acidic residues" evidence="2">
    <location>
        <begin position="328"/>
        <end position="349"/>
    </location>
</feature>
<feature type="compositionally biased region" description="Polar residues" evidence="2">
    <location>
        <begin position="353"/>
        <end position="372"/>
    </location>
</feature>
<feature type="compositionally biased region" description="Acidic residues" evidence="2">
    <location>
        <begin position="373"/>
        <end position="390"/>
    </location>
</feature>
<feature type="compositionally biased region" description="Acidic residues" evidence="2">
    <location>
        <begin position="400"/>
        <end position="412"/>
    </location>
</feature>
<feature type="modified residue" description="Phosphoserine" evidence="3">
    <location>
        <position position="308"/>
    </location>
</feature>
<feature type="sequence conflict" description="In Ref. 2; AAH80207." evidence="4" ref="2">
    <original>L</original>
    <variation>S</variation>
    <location>
        <position position="236"/>
    </location>
</feature>
<feature type="sequence conflict" description="In Ref. 2; AAH80207." evidence="4" ref="2">
    <original>D</original>
    <variation>G</variation>
    <location>
        <position position="257"/>
    </location>
</feature>
<feature type="sequence conflict" description="In Ref. 2; AAH80207." evidence="4" ref="2">
    <original>A</original>
    <variation>V</variation>
    <location>
        <position position="333"/>
    </location>
</feature>
<name>BSDC1_DANRE</name>